<reference key="1">
    <citation type="journal article" date="2010" name="J. Bacteriol.">
        <title>Complete genome sequence of Beijerinckia indica subsp. indica.</title>
        <authorList>
            <person name="Tamas I."/>
            <person name="Dedysh S.N."/>
            <person name="Liesack W."/>
            <person name="Stott M.B."/>
            <person name="Alam M."/>
            <person name="Murrell J.C."/>
            <person name="Dunfield P.F."/>
        </authorList>
    </citation>
    <scope>NUCLEOTIDE SEQUENCE [LARGE SCALE GENOMIC DNA]</scope>
    <source>
        <strain>ATCC 9039 / DSM 1715 / NCIMB 8712</strain>
    </source>
</reference>
<organism>
    <name type="scientific">Beijerinckia indica subsp. indica (strain ATCC 9039 / DSM 1715 / NCIMB 8712)</name>
    <dbReference type="NCBI Taxonomy" id="395963"/>
    <lineage>
        <taxon>Bacteria</taxon>
        <taxon>Pseudomonadati</taxon>
        <taxon>Pseudomonadota</taxon>
        <taxon>Alphaproteobacteria</taxon>
        <taxon>Hyphomicrobiales</taxon>
        <taxon>Beijerinckiaceae</taxon>
        <taxon>Beijerinckia</taxon>
    </lineage>
</organism>
<dbReference type="EMBL" id="CP001016">
    <property type="protein sequence ID" value="ACB93664.1"/>
    <property type="molecule type" value="Genomic_DNA"/>
</dbReference>
<dbReference type="RefSeq" id="WP_012383022.1">
    <property type="nucleotide sequence ID" value="NC_010581.1"/>
</dbReference>
<dbReference type="SMR" id="B2IAW4"/>
<dbReference type="STRING" id="395963.Bind_0005"/>
<dbReference type="KEGG" id="bid:Bind_0005"/>
<dbReference type="eggNOG" id="COG0632">
    <property type="taxonomic scope" value="Bacteria"/>
</dbReference>
<dbReference type="HOGENOM" id="CLU_087936_3_0_5"/>
<dbReference type="OrthoDB" id="5293449at2"/>
<dbReference type="Proteomes" id="UP000001695">
    <property type="component" value="Chromosome"/>
</dbReference>
<dbReference type="GO" id="GO:0005737">
    <property type="term" value="C:cytoplasm"/>
    <property type="evidence" value="ECO:0007669"/>
    <property type="project" value="UniProtKB-SubCell"/>
</dbReference>
<dbReference type="GO" id="GO:0009379">
    <property type="term" value="C:Holliday junction helicase complex"/>
    <property type="evidence" value="ECO:0007669"/>
    <property type="project" value="InterPro"/>
</dbReference>
<dbReference type="GO" id="GO:0048476">
    <property type="term" value="C:Holliday junction resolvase complex"/>
    <property type="evidence" value="ECO:0007669"/>
    <property type="project" value="UniProtKB-UniRule"/>
</dbReference>
<dbReference type="GO" id="GO:0005524">
    <property type="term" value="F:ATP binding"/>
    <property type="evidence" value="ECO:0007669"/>
    <property type="project" value="InterPro"/>
</dbReference>
<dbReference type="GO" id="GO:0000400">
    <property type="term" value="F:four-way junction DNA binding"/>
    <property type="evidence" value="ECO:0007669"/>
    <property type="project" value="UniProtKB-UniRule"/>
</dbReference>
<dbReference type="GO" id="GO:0009378">
    <property type="term" value="F:four-way junction helicase activity"/>
    <property type="evidence" value="ECO:0007669"/>
    <property type="project" value="InterPro"/>
</dbReference>
<dbReference type="GO" id="GO:0006310">
    <property type="term" value="P:DNA recombination"/>
    <property type="evidence" value="ECO:0007669"/>
    <property type="project" value="UniProtKB-UniRule"/>
</dbReference>
<dbReference type="GO" id="GO:0006281">
    <property type="term" value="P:DNA repair"/>
    <property type="evidence" value="ECO:0007669"/>
    <property type="project" value="UniProtKB-UniRule"/>
</dbReference>
<dbReference type="CDD" id="cd14332">
    <property type="entry name" value="UBA_RuvA_C"/>
    <property type="match status" value="1"/>
</dbReference>
<dbReference type="Gene3D" id="1.10.150.20">
    <property type="entry name" value="5' to 3' exonuclease, C-terminal subdomain"/>
    <property type="match status" value="1"/>
</dbReference>
<dbReference type="Gene3D" id="1.10.8.10">
    <property type="entry name" value="DNA helicase RuvA subunit, C-terminal domain"/>
    <property type="match status" value="1"/>
</dbReference>
<dbReference type="Gene3D" id="2.40.50.140">
    <property type="entry name" value="Nucleic acid-binding proteins"/>
    <property type="match status" value="1"/>
</dbReference>
<dbReference type="HAMAP" id="MF_00031">
    <property type="entry name" value="DNA_HJ_migration_RuvA"/>
    <property type="match status" value="1"/>
</dbReference>
<dbReference type="InterPro" id="IPR013849">
    <property type="entry name" value="DNA_helicase_Holl-junc_RuvA_I"/>
</dbReference>
<dbReference type="InterPro" id="IPR012340">
    <property type="entry name" value="NA-bd_OB-fold"/>
</dbReference>
<dbReference type="InterPro" id="IPR000085">
    <property type="entry name" value="RuvA"/>
</dbReference>
<dbReference type="InterPro" id="IPR010994">
    <property type="entry name" value="RuvA_2-like"/>
</dbReference>
<dbReference type="InterPro" id="IPR011114">
    <property type="entry name" value="RuvA_C"/>
</dbReference>
<dbReference type="InterPro" id="IPR036267">
    <property type="entry name" value="RuvA_C_sf"/>
</dbReference>
<dbReference type="NCBIfam" id="TIGR00084">
    <property type="entry name" value="ruvA"/>
    <property type="match status" value="1"/>
</dbReference>
<dbReference type="Pfam" id="PF14520">
    <property type="entry name" value="HHH_5"/>
    <property type="match status" value="1"/>
</dbReference>
<dbReference type="Pfam" id="PF07499">
    <property type="entry name" value="RuvA_C"/>
    <property type="match status" value="1"/>
</dbReference>
<dbReference type="Pfam" id="PF01330">
    <property type="entry name" value="RuvA_N"/>
    <property type="match status" value="1"/>
</dbReference>
<dbReference type="SUPFAM" id="SSF46929">
    <property type="entry name" value="DNA helicase RuvA subunit, C-terminal domain"/>
    <property type="match status" value="1"/>
</dbReference>
<dbReference type="SUPFAM" id="SSF50249">
    <property type="entry name" value="Nucleic acid-binding proteins"/>
    <property type="match status" value="1"/>
</dbReference>
<dbReference type="SUPFAM" id="SSF47781">
    <property type="entry name" value="RuvA domain 2-like"/>
    <property type="match status" value="1"/>
</dbReference>
<accession>B2IAW4</accession>
<name>RUVA_BEII9</name>
<evidence type="ECO:0000255" key="1">
    <source>
        <dbReference type="HAMAP-Rule" id="MF_00031"/>
    </source>
</evidence>
<protein>
    <recommendedName>
        <fullName evidence="1">Holliday junction branch migration complex subunit RuvA</fullName>
    </recommendedName>
</protein>
<keyword id="KW-0963">Cytoplasm</keyword>
<keyword id="KW-0227">DNA damage</keyword>
<keyword id="KW-0233">DNA recombination</keyword>
<keyword id="KW-0234">DNA repair</keyword>
<keyword id="KW-0238">DNA-binding</keyword>
<keyword id="KW-1185">Reference proteome</keyword>
<comment type="function">
    <text evidence="1">The RuvA-RuvB-RuvC complex processes Holliday junction (HJ) DNA during genetic recombination and DNA repair, while the RuvA-RuvB complex plays an important role in the rescue of blocked DNA replication forks via replication fork reversal (RFR). RuvA specifically binds to HJ cruciform DNA, conferring on it an open structure. The RuvB hexamer acts as an ATP-dependent pump, pulling dsDNA into and through the RuvAB complex. HJ branch migration allows RuvC to scan DNA until it finds its consensus sequence, where it cleaves and resolves the cruciform DNA.</text>
</comment>
<comment type="subunit">
    <text evidence="1">Homotetramer. Forms an RuvA(8)-RuvB(12)-Holliday junction (HJ) complex. HJ DNA is sandwiched between 2 RuvA tetramers; dsDNA enters through RuvA and exits via RuvB. An RuvB hexamer assembles on each DNA strand where it exits the tetramer. Each RuvB hexamer is contacted by two RuvA subunits (via domain III) on 2 adjacent RuvB subunits; this complex drives branch migration. In the full resolvosome a probable DNA-RuvA(4)-RuvB(12)-RuvC(2) complex forms which resolves the HJ.</text>
</comment>
<comment type="subcellular location">
    <subcellularLocation>
        <location evidence="1">Cytoplasm</location>
    </subcellularLocation>
</comment>
<comment type="domain">
    <text evidence="1">Has three domains with a flexible linker between the domains II and III and assumes an 'L' shape. Domain III is highly mobile and contacts RuvB.</text>
</comment>
<comment type="similarity">
    <text evidence="1">Belongs to the RuvA family.</text>
</comment>
<feature type="chain" id="PRO_1000090282" description="Holliday junction branch migration complex subunit RuvA">
    <location>
        <begin position="1"/>
        <end position="205"/>
    </location>
</feature>
<feature type="region of interest" description="Domain I" evidence="1">
    <location>
        <begin position="1"/>
        <end position="64"/>
    </location>
</feature>
<feature type="region of interest" description="Domain II" evidence="1">
    <location>
        <begin position="65"/>
        <end position="143"/>
    </location>
</feature>
<feature type="region of interest" description="Flexible linker" evidence="1">
    <location>
        <begin position="144"/>
        <end position="153"/>
    </location>
</feature>
<feature type="region of interest" description="Domain III" evidence="1">
    <location>
        <begin position="153"/>
        <end position="205"/>
    </location>
</feature>
<gene>
    <name evidence="1" type="primary">ruvA</name>
    <name type="ordered locus">Bind_0005</name>
</gene>
<proteinExistence type="inferred from homology"/>
<sequence length="205" mass="21429">MIGKLTGLVDSQGEDHVILDVQGVGYIVFCSSRTLRLLPKPGASTALLIEMQVREDAIRLFGFPSEVERDWFRLLQSVQGVGAKVALALQGLLSATELAQAIALQDKASLGRAPGVGPKLAARLITELKDKMPALGPVDSLTAKLTIAEAEGTAPVAAQDAITALVNLGYGRPQAAAAVATSLEALGETAPLADLIRRGLKELAR</sequence>